<reference key="1">
    <citation type="journal article" date="2000" name="Science">
        <title>Aureusidin synthase: a polyphenol oxidase homolog responsible for flower coloration.</title>
        <authorList>
            <person name="Nakayama T."/>
            <person name="Yonekura-Sakakibara K."/>
            <person name="Sato T."/>
            <person name="Kikuchi S."/>
            <person name="Fukui Y."/>
            <person name="Fukuchi-Mizutani M."/>
            <person name="Ueda T."/>
            <person name="Nakao M."/>
            <person name="Tanaka Y."/>
            <person name="Kusumi T."/>
            <person name="Nishino T."/>
        </authorList>
    </citation>
    <scope>NUCLEOTIDE SEQUENCE [MRNA]</scope>
    <scope>PROTEIN SEQUENCE OF 93-121; 263-293 AND 389-400</scope>
    <scope>FUNCTION</scope>
    <scope>CATALYTIC ACTIVITY</scope>
    <scope>SUBUNIT</scope>
    <scope>GLYCOSYLATION</scope>
    <scope>BIOPHYSICOCHEMICAL PROPERTIES</scope>
    <scope>COFACTOR</scope>
    <scope>ACTIVITY REGULATION</scope>
    <scope>TISSUE SPECIFICITY</scope>
</reference>
<reference key="2">
    <citation type="submission" date="2007-06" db="EMBL/GenBank/DDBJ databases">
        <title>Genes involved in aurone biosynthesis.</title>
        <authorList>
            <person name="Wang C.-K."/>
            <person name="To K.-Y."/>
        </authorList>
    </citation>
    <scope>NUCLEOTIDE SEQUENCE [MRNA]</scope>
</reference>
<reference key="3">
    <citation type="journal article" date="2001" name="FEBS Lett.">
        <title>Specificity analysis and mechanism of aurone synthesis catalyzed by aureusidin synthase, a polyphenol oxidase homolog responsible for flower coloration.</title>
        <authorList>
            <person name="Nakayama T."/>
            <person name="Sato T."/>
            <person name="Fukui Y."/>
            <person name="Yonekura-Sakakibara K."/>
            <person name="Hayashi H."/>
            <person name="Tanaka Y."/>
            <person name="Kusumi T."/>
            <person name="Nishino T."/>
        </authorList>
    </citation>
    <scope>CATALYTIC ACTIVITY</scope>
    <scope>BIOPHYSICOCHEMICAL PROPERTIES</scope>
    <scope>SUBSTRATE SPECIFICITY</scope>
    <scope>ACTIVITY REGULATION</scope>
</reference>
<reference key="4">
    <citation type="journal article" date="2006" name="Plant J.">
        <title>Localization of a flavonoid biosynthetic polyphenol oxidase in vacuoles.</title>
        <authorList>
            <person name="Ono E."/>
            <person name="Hatayama M."/>
            <person name="Isono Y."/>
            <person name="Sato T."/>
            <person name="Watanabe R."/>
            <person name="Yonekura-Sakakibara K."/>
            <person name="Fukuchi-Mizutani M."/>
            <person name="Tanaka Y."/>
            <person name="Kusumi T."/>
            <person name="Nishino T."/>
            <person name="Nakayama T."/>
        </authorList>
    </citation>
    <scope>SUBCELLULAR LOCATION</scope>
    <scope>MUTAGENESIS OF LEU-50 AND TYR-52</scope>
</reference>
<reference key="5">
    <citation type="journal article" date="2011" name="Int. J. Biol. Macromol.">
        <title>Homology modeling and dynamics study of aureusidin synthase--an important enzyme in aurone biosynthesis of snapdragon flower.</title>
        <authorList>
            <person name="Elumalai P."/>
            <person name="Liu H.L."/>
        </authorList>
    </citation>
    <scope>3D-STRUCTURE MODELING</scope>
</reference>
<reference key="6">
    <citation type="journal article" date="2006" name="Proc. Natl. Acad. Sci. U.S.A.">
        <title>Yellow flowers generated by expression of the aurone biosynthetic pathway.</title>
        <authorList>
            <person name="Ono E."/>
            <person name="Fukuchi-Mizutani M."/>
            <person name="Nakamura N."/>
            <person name="Fukui Y."/>
            <person name="Yonekura-Sakakibara K."/>
            <person name="Yamaguchi M."/>
            <person name="Nakayama T."/>
            <person name="Tanaka T."/>
            <person name="Kusumi T."/>
            <person name="Tanaka Y."/>
        </authorList>
    </citation>
    <scope>FUNCTION</scope>
    <scope>SUBCELLULAR LOCATION</scope>
</reference>
<gene>
    <name type="primary">AS1</name>
</gene>
<evidence type="ECO:0000250" key="1">
    <source>
        <dbReference type="UniProtKB" id="Q9ZP19"/>
    </source>
</evidence>
<evidence type="ECO:0000269" key="2">
    <source>
    </source>
</evidence>
<evidence type="ECO:0000269" key="3">
    <source>
    </source>
</evidence>
<evidence type="ECO:0000269" key="4">
    <source>
    </source>
</evidence>
<evidence type="ECO:0000269" key="5">
    <source>
    </source>
</evidence>
<evidence type="ECO:0000305" key="6"/>
<proteinExistence type="evidence at protein level"/>
<keyword id="KW-0186">Copper</keyword>
<keyword id="KW-0903">Direct protein sequencing</keyword>
<keyword id="KW-1015">Disulfide bond</keyword>
<keyword id="KW-0325">Glycoprotein</keyword>
<keyword id="KW-0479">Metal-binding</keyword>
<keyword id="KW-0560">Oxidoreductase</keyword>
<keyword id="KW-0883">Thioether bond</keyword>
<keyword id="KW-0926">Vacuole</keyword>
<sequence length="562" mass="64044">MFKNPNIRYHKLSSKSNDNDQESSHRCKHILLFIITLFLLIVGLYIANSLAYARFASTSTGPIAAPDVTKCGQPDLPPGTAPINCCPPIPAKIIDFELPPPSTTMRVRRAAHLVDDAYIAKFKKAVELMRALPEDDPRSFKQQANVHCAYCAGAYNQAGFTNLKLQIHRSWLFFPFHRYYIYFFERILGKLINDTTFALPFWNYDSPGGMTIPSMFIDTNSSLYDSLRDSNHQPPTIVDLNYAFSDSDNTTTPEEQMIINLKIVYRQMVSSAKTPQLFFGRPYRRGDQEFPGVGSIELVPHGMIHLWTGSENTPYGENMGAFYSTARDPIFFAHHSNVDRMWSIWKTLGGPRRTDLTDPDFLDASFVFYDENAEMVRVKVRDCLDEKKLGYVYQDVEIPWLNTRPTPKVSPSLLKKFHRTNTANPRQVFPAILDRVLKVIVTRPKKTRSRKEKDELEEILVIEGIELERDHGHVKFDVYINADEDDLAVISPENAEFAGSFVSLWHKPIKGKRTKTQLLTLSICDILEDLDADEDDYVLVTLVPRNAGDAIKIHNVKIELDG</sequence>
<accession>Q9FRX6</accession>
<feature type="chain" id="PRO_0000418416" description="Aureusidin synthase">
    <location>
        <begin position="1"/>
        <end position="562"/>
    </location>
</feature>
<feature type="binding site" evidence="1">
    <location>
        <position position="147"/>
    </location>
    <ligand>
        <name>Cu cation</name>
        <dbReference type="ChEBI" id="CHEBI:23378"/>
        <label>A</label>
    </ligand>
</feature>
<feature type="binding site" evidence="1">
    <location>
        <position position="168"/>
    </location>
    <ligand>
        <name>Cu cation</name>
        <dbReference type="ChEBI" id="CHEBI:23378"/>
        <label>A</label>
    </ligand>
</feature>
<feature type="binding site" evidence="1">
    <location>
        <position position="177"/>
    </location>
    <ligand>
        <name>Cu cation</name>
        <dbReference type="ChEBI" id="CHEBI:23378"/>
        <label>A</label>
    </ligand>
</feature>
<feature type="binding site" evidence="1">
    <location>
        <position position="301"/>
    </location>
    <ligand>
        <name>Cu cation</name>
        <dbReference type="ChEBI" id="CHEBI:23378"/>
        <label>B</label>
    </ligand>
</feature>
<feature type="binding site" evidence="1">
    <location>
        <position position="305"/>
    </location>
    <ligand>
        <name>Cu cation</name>
        <dbReference type="ChEBI" id="CHEBI:23378"/>
        <label>B</label>
    </ligand>
</feature>
<feature type="binding site" evidence="1">
    <location>
        <position position="335"/>
    </location>
    <ligand>
        <name>Cu cation</name>
        <dbReference type="ChEBI" id="CHEBI:23378"/>
        <label>B</label>
    </ligand>
</feature>
<feature type="disulfide bond" evidence="1">
    <location>
        <begin position="71"/>
        <end position="86"/>
    </location>
</feature>
<feature type="disulfide bond" evidence="1">
    <location>
        <begin position="85"/>
        <end position="148"/>
    </location>
</feature>
<feature type="cross-link" description="2'-(S-cysteinyl)-histidine (Cys-His)" evidence="1">
    <location>
        <begin position="151"/>
        <end position="168"/>
    </location>
</feature>
<feature type="mutagenesis site" description="Loss of vacuolar targeting." evidence="4">
    <original>L</original>
    <variation>F</variation>
    <location>
        <position position="50"/>
    </location>
</feature>
<feature type="mutagenesis site" description="Loss of vacuolar targeting." evidence="4">
    <original>Y</original>
    <variation>P</variation>
    <location>
        <position position="52"/>
    </location>
</feature>
<name>AS1_ANTMA</name>
<protein>
    <recommendedName>
        <fullName>Aureusidin synthase</fullName>
        <shortName>AmAS1</shortName>
        <ecNumber evidence="2 3">1.21.3.6</ecNumber>
    </recommendedName>
</protein>
<organism>
    <name type="scientific">Antirrhinum majus</name>
    <name type="common">Garden snapdragon</name>
    <dbReference type="NCBI Taxonomy" id="4151"/>
    <lineage>
        <taxon>Eukaryota</taxon>
        <taxon>Viridiplantae</taxon>
        <taxon>Streptophyta</taxon>
        <taxon>Embryophyta</taxon>
        <taxon>Tracheophyta</taxon>
        <taxon>Spermatophyta</taxon>
        <taxon>Magnoliopsida</taxon>
        <taxon>eudicotyledons</taxon>
        <taxon>Gunneridae</taxon>
        <taxon>Pentapetalae</taxon>
        <taxon>asterids</taxon>
        <taxon>lamiids</taxon>
        <taxon>Lamiales</taxon>
        <taxon>Plantaginaceae</taxon>
        <taxon>Antirrhineae</taxon>
        <taxon>Antirrhinum</taxon>
    </lineage>
</organism>
<dbReference type="EC" id="1.21.3.6" evidence="2 3"/>
<dbReference type="EMBL" id="AB044884">
    <property type="protein sequence ID" value="BAB20048.1"/>
    <property type="molecule type" value="mRNA"/>
</dbReference>
<dbReference type="EMBL" id="EF650014">
    <property type="protein sequence ID" value="ABR57233.1"/>
    <property type="molecule type" value="mRNA"/>
</dbReference>
<dbReference type="SMR" id="Q9FRX6"/>
<dbReference type="KEGG" id="ag:BAB20048"/>
<dbReference type="BRENDA" id="1.14.18.1">
    <property type="organism ID" value="376"/>
</dbReference>
<dbReference type="BRENDA" id="1.21.3.6">
    <property type="organism ID" value="376"/>
</dbReference>
<dbReference type="GO" id="GO:0005775">
    <property type="term" value="C:vacuolar lumen"/>
    <property type="evidence" value="ECO:0000314"/>
    <property type="project" value="UniProtKB"/>
</dbReference>
<dbReference type="GO" id="GO:0033793">
    <property type="term" value="F:aureusidin synthase activity"/>
    <property type="evidence" value="ECO:0000314"/>
    <property type="project" value="UniProtKB"/>
</dbReference>
<dbReference type="GO" id="GO:0004097">
    <property type="term" value="F:catechol oxidase activity"/>
    <property type="evidence" value="ECO:0007669"/>
    <property type="project" value="InterPro"/>
</dbReference>
<dbReference type="GO" id="GO:0005507">
    <property type="term" value="F:copper ion binding"/>
    <property type="evidence" value="ECO:0000314"/>
    <property type="project" value="UniProtKB"/>
</dbReference>
<dbReference type="GO" id="GO:0046148">
    <property type="term" value="P:pigment biosynthetic process"/>
    <property type="evidence" value="ECO:0000314"/>
    <property type="project" value="UniProtKB"/>
</dbReference>
<dbReference type="FunFam" id="1.10.1280.10:FF:000007">
    <property type="entry name" value="Polyphenol oxidase, chloroplastic"/>
    <property type="match status" value="1"/>
</dbReference>
<dbReference type="Gene3D" id="1.10.1280.10">
    <property type="entry name" value="Di-copper center containing domain from catechol oxidase"/>
    <property type="match status" value="1"/>
</dbReference>
<dbReference type="InterPro" id="IPR008922">
    <property type="entry name" value="Di-copper_centre_dom_sf"/>
</dbReference>
<dbReference type="InterPro" id="IPR016213">
    <property type="entry name" value="Polyphenol_oxidase"/>
</dbReference>
<dbReference type="InterPro" id="IPR022740">
    <property type="entry name" value="Polyphenol_oxidase_C"/>
</dbReference>
<dbReference type="InterPro" id="IPR022739">
    <property type="entry name" value="Polyphenol_oxidase_cen"/>
</dbReference>
<dbReference type="InterPro" id="IPR050316">
    <property type="entry name" value="Tyrosinase/Hemocyanin"/>
</dbReference>
<dbReference type="InterPro" id="IPR002227">
    <property type="entry name" value="Tyrosinase_Cu-bd"/>
</dbReference>
<dbReference type="PANTHER" id="PTHR11474:SF76">
    <property type="entry name" value="SHKT DOMAIN-CONTAINING PROTEIN"/>
    <property type="match status" value="1"/>
</dbReference>
<dbReference type="PANTHER" id="PTHR11474">
    <property type="entry name" value="TYROSINASE FAMILY MEMBER"/>
    <property type="match status" value="1"/>
</dbReference>
<dbReference type="Pfam" id="PF12142">
    <property type="entry name" value="PPO1_DWL"/>
    <property type="match status" value="1"/>
</dbReference>
<dbReference type="Pfam" id="PF12143">
    <property type="entry name" value="PPO1_KFDV"/>
    <property type="match status" value="1"/>
</dbReference>
<dbReference type="Pfam" id="PF00264">
    <property type="entry name" value="Tyrosinase"/>
    <property type="match status" value="1"/>
</dbReference>
<dbReference type="PIRSF" id="PIRSF000290">
    <property type="entry name" value="PPO_plant"/>
    <property type="match status" value="1"/>
</dbReference>
<dbReference type="PRINTS" id="PR00092">
    <property type="entry name" value="TYROSINASE"/>
</dbReference>
<dbReference type="SUPFAM" id="SSF48056">
    <property type="entry name" value="Di-copper centre-containing domain"/>
    <property type="match status" value="1"/>
</dbReference>
<dbReference type="PROSITE" id="PS00498">
    <property type="entry name" value="TYROSINASE_2"/>
    <property type="match status" value="1"/>
</dbReference>
<comment type="function">
    <text evidence="2 5">Involved in the biosynthesis of aurones, plant flavonoids that provide yellow coloration to flowers. Can use tetrahydroxychalcone (THC), pentahydroxychalcone (PHC), THC 4'-glucoside and PHC 4'-glucoside as substrates, but not 2'-hydroxychalcone, 4-hydroxychalcone, PHC 3-glucoside, 2',6'-dihydroxy-4,4'-dimethoxychalcone, naringenin, eriodictyol and 4,4',6-trihydroxyaurone. Can also produce bracteatin from PHC.</text>
</comment>
<comment type="catalytic activity">
    <reaction evidence="2 3">
        <text>2',4,4',6'-tetrahydroxychalcone 4'-O-beta-D-glucoside + O2 = aureusidin 6-O-beta-glucoside + H2O</text>
        <dbReference type="Rhea" id="RHEA:34203"/>
        <dbReference type="ChEBI" id="CHEBI:15377"/>
        <dbReference type="ChEBI" id="CHEBI:15379"/>
        <dbReference type="ChEBI" id="CHEBI:66905"/>
        <dbReference type="ChEBI" id="CHEBI:66906"/>
        <dbReference type="EC" id="1.21.3.6"/>
    </reaction>
</comment>
<comment type="catalytic activity">
    <reaction evidence="2 3">
        <text>2 2',3,4,4',6'-pentahydroxychalcone 4'-O-beta-D-glucoside + O2 + 2 H(+) = 2 aureusidin 6-O-beta-glucoside + 2 H2O</text>
        <dbReference type="Rhea" id="RHEA:34195"/>
        <dbReference type="ChEBI" id="CHEBI:15377"/>
        <dbReference type="ChEBI" id="CHEBI:15378"/>
        <dbReference type="ChEBI" id="CHEBI:15379"/>
        <dbReference type="ChEBI" id="CHEBI:66905"/>
        <dbReference type="ChEBI" id="CHEBI:77622"/>
        <dbReference type="EC" id="1.21.3.6"/>
    </reaction>
</comment>
<comment type="catalytic activity">
    <reaction evidence="2 3">
        <text>2',3,4,4',6'-pentahydroxychalcone 4'-O-beta-D-glucoside + O2 + H(+) = bracteatin 6-O-beta-glucoside + H2O</text>
        <dbReference type="Rhea" id="RHEA:34199"/>
        <dbReference type="ChEBI" id="CHEBI:15377"/>
        <dbReference type="ChEBI" id="CHEBI:15378"/>
        <dbReference type="ChEBI" id="CHEBI:15379"/>
        <dbReference type="ChEBI" id="CHEBI:66907"/>
        <dbReference type="ChEBI" id="CHEBI:77622"/>
        <dbReference type="EC" id="1.21.3.6"/>
    </reaction>
</comment>
<comment type="cofactor">
    <cofactor evidence="2">
        <name>Cu(2+)</name>
        <dbReference type="ChEBI" id="CHEBI:29036"/>
    </cofactor>
    <text evidence="2">Binds 2 copper ions per subunit.</text>
</comment>
<comment type="activity regulation">
    <text evidence="2 3">H(2)O(2) activates the 3-hydroxylation and oxidative cyclization of tetrahydroxychalcone but inhibits reaction with pentahydroxychalcone. Inhibited by phenylthiourea.</text>
</comment>
<comment type="biophysicochemical properties">
    <kinetics>
        <KM evidence="2 3">4.3 uM for 2',4,4',6'-tetrahydroxychalcone</KM>
        <KM evidence="2 3">3.9 uM for 2',4,4',6'-tetrahydroxychalcone 4'-glucoside</KM>
        <KM evidence="2 3">2.5 uM for isoliquiritigenin</KM>
        <KM evidence="2 3">15.7 uM for 2',3,4,4',6'-pentahydroxychalcone</KM>
        <KM evidence="2 3">8.1 uM for 2',3,4,4',6'-pentahydroxychalcone 4'-glucoside</KM>
        <KM evidence="2 3">14.7 uM for butein</KM>
    </kinetics>
    <phDependence>
        <text evidence="2 3">Optimum pH is 5.4 for the reaction with tetrahydroxychalcone and 5.0 - 7.0 for the reaction with pentahydroxychalcone.</text>
    </phDependence>
</comment>
<comment type="subunit">
    <text evidence="2">Monomer.</text>
</comment>
<comment type="subcellular location">
    <subcellularLocation>
        <location evidence="4 5">Vacuole lumen</location>
    </subcellularLocation>
</comment>
<comment type="tissue specificity">
    <text evidence="2">Expressed in petals. Not detected in stems and leaves.</text>
</comment>
<comment type="domain">
    <text>The N-terminal sequence (1-53) is sufficient for vacuolar targeting.</text>
</comment>
<comment type="PTM">
    <text evidence="2">Glycosylated.</text>
</comment>
<comment type="PTM">
    <text>Contains probably N- and C-terminal propeptides.</text>
</comment>
<comment type="similarity">
    <text evidence="6">Belongs to the tyrosinase family.</text>
</comment>